<evidence type="ECO:0000250" key="1">
    <source>
        <dbReference type="UniProtKB" id="Q9C0F3"/>
    </source>
</evidence>
<evidence type="ECO:0000255" key="2">
    <source>
        <dbReference type="PROSITE-ProRule" id="PRU00042"/>
    </source>
</evidence>
<evidence type="ECO:0000255" key="3">
    <source>
        <dbReference type="PROSITE-ProRule" id="PRU00119"/>
    </source>
</evidence>
<evidence type="ECO:0000256" key="4">
    <source>
        <dbReference type="SAM" id="MobiDB-lite"/>
    </source>
</evidence>
<evidence type="ECO:0000269" key="5">
    <source>
    </source>
</evidence>
<evidence type="ECO:0000305" key="6"/>
<proteinExistence type="evidence at transcript level"/>
<dbReference type="EMBL" id="AK173240">
    <property type="protein sequence ID" value="BAD32518.1"/>
    <property type="status" value="ALT_INIT"/>
    <property type="molecule type" value="mRNA"/>
</dbReference>
<dbReference type="EMBL" id="AK051031">
    <property type="protein sequence ID" value="BAC34503.1"/>
    <property type="molecule type" value="mRNA"/>
</dbReference>
<dbReference type="EMBL" id="AK053652">
    <property type="protein sequence ID" value="BAC35464.1"/>
    <property type="molecule type" value="mRNA"/>
</dbReference>
<dbReference type="EMBL" id="AK136405">
    <property type="protein sequence ID" value="BAE22966.1"/>
    <property type="molecule type" value="mRNA"/>
</dbReference>
<dbReference type="EMBL" id="AK148255">
    <property type="protein sequence ID" value="BAE28441.1"/>
    <property type="molecule type" value="mRNA"/>
</dbReference>
<dbReference type="EMBL" id="M98502">
    <property type="protein sequence ID" value="AAA39949.1"/>
    <property type="status" value="ALT_INIT"/>
    <property type="molecule type" value="mRNA"/>
</dbReference>
<dbReference type="CCDS" id="CCDS18804.1"/>
<dbReference type="PIR" id="JN0533">
    <property type="entry name" value="JN0533"/>
</dbReference>
<dbReference type="RefSeq" id="NP_033583.2">
    <property type="nucleotide sequence ID" value="NM_009557.3"/>
</dbReference>
<dbReference type="RefSeq" id="XP_006538794.1">
    <property type="nucleotide sequence ID" value="XM_006538731.1"/>
</dbReference>
<dbReference type="RefSeq" id="XP_006538795.1">
    <property type="nucleotide sequence ID" value="XM_006538732.1"/>
</dbReference>
<dbReference type="SMR" id="Q8BPP0"/>
<dbReference type="FunCoup" id="Q8BPP0">
    <property type="interactions" value="426"/>
</dbReference>
<dbReference type="STRING" id="10090.ENSMUSP00000070216"/>
<dbReference type="iPTMnet" id="Q8BPP0"/>
<dbReference type="PhosphoSitePlus" id="Q8BPP0"/>
<dbReference type="PaxDb" id="10090-ENSMUSP00000070216"/>
<dbReference type="ProteomicsDB" id="275288"/>
<dbReference type="Antibodypedia" id="15569">
    <property type="antibodies" value="134 antibodies from 24 providers"/>
</dbReference>
<dbReference type="DNASU" id="22704"/>
<dbReference type="Ensembl" id="ENSMUST00000069195.5">
    <property type="protein sequence ID" value="ENSMUSP00000070216.5"/>
    <property type="gene ID" value="ENSMUSG00000051351.15"/>
</dbReference>
<dbReference type="GeneID" id="22704"/>
<dbReference type="KEGG" id="mmu:22704"/>
<dbReference type="UCSC" id="uc008vhw.1">
    <property type="organism name" value="mouse"/>
</dbReference>
<dbReference type="AGR" id="MGI:99192"/>
<dbReference type="CTD" id="22704"/>
<dbReference type="MGI" id="MGI:99192">
    <property type="gene designation" value="Zfp46"/>
</dbReference>
<dbReference type="VEuPathDB" id="HostDB:ENSMUSG00000051351"/>
<dbReference type="eggNOG" id="KOG1721">
    <property type="taxonomic scope" value="Eukaryota"/>
</dbReference>
<dbReference type="GeneTree" id="ENSGT00940000153587"/>
<dbReference type="HOGENOM" id="CLU_002678_44_5_1"/>
<dbReference type="InParanoid" id="Q8BPP0"/>
<dbReference type="OMA" id="EAHTGIR"/>
<dbReference type="OrthoDB" id="6591996at2759"/>
<dbReference type="PhylomeDB" id="Q8BPP0"/>
<dbReference type="TreeFam" id="TF337055"/>
<dbReference type="BioGRID-ORCS" id="22704">
    <property type="hits" value="3 hits in 79 CRISPR screens"/>
</dbReference>
<dbReference type="ChiTaRS" id="Zfp46">
    <property type="organism name" value="mouse"/>
</dbReference>
<dbReference type="PRO" id="PR:Q8BPP0"/>
<dbReference type="Proteomes" id="UP000000589">
    <property type="component" value="Chromosome 4"/>
</dbReference>
<dbReference type="RNAct" id="Q8BPP0">
    <property type="molecule type" value="protein"/>
</dbReference>
<dbReference type="Bgee" id="ENSMUSG00000051351">
    <property type="expression patterns" value="Expressed in vas deferens and 251 other cell types or tissues"/>
</dbReference>
<dbReference type="ExpressionAtlas" id="Q8BPP0">
    <property type="expression patterns" value="baseline and differential"/>
</dbReference>
<dbReference type="GO" id="GO:0005829">
    <property type="term" value="C:cytosol"/>
    <property type="evidence" value="ECO:0007669"/>
    <property type="project" value="Ensembl"/>
</dbReference>
<dbReference type="GO" id="GO:0005654">
    <property type="term" value="C:nucleoplasm"/>
    <property type="evidence" value="ECO:0007669"/>
    <property type="project" value="Ensembl"/>
</dbReference>
<dbReference type="GO" id="GO:0003677">
    <property type="term" value="F:DNA binding"/>
    <property type="evidence" value="ECO:0007669"/>
    <property type="project" value="UniProtKB-KW"/>
</dbReference>
<dbReference type="GO" id="GO:0008270">
    <property type="term" value="F:zinc ion binding"/>
    <property type="evidence" value="ECO:0007669"/>
    <property type="project" value="UniProtKB-KW"/>
</dbReference>
<dbReference type="GO" id="GO:0006355">
    <property type="term" value="P:regulation of DNA-templated transcription"/>
    <property type="evidence" value="ECO:0007669"/>
    <property type="project" value="InterPro"/>
</dbReference>
<dbReference type="CDD" id="cd07765">
    <property type="entry name" value="KRAB_A-box"/>
    <property type="match status" value="1"/>
</dbReference>
<dbReference type="FunFam" id="3.30.160.60:FF:000139">
    <property type="entry name" value="zinc finger protein 1 homolog"/>
    <property type="match status" value="2"/>
</dbReference>
<dbReference type="FunFam" id="3.30.160.60:FF:002343">
    <property type="entry name" value="Zinc finger protein 33A"/>
    <property type="match status" value="1"/>
</dbReference>
<dbReference type="FunFam" id="3.30.160.60:FF:000016">
    <property type="entry name" value="zinc finger protein 37 homolog"/>
    <property type="match status" value="1"/>
</dbReference>
<dbReference type="FunFam" id="3.30.160.60:FF:000023">
    <property type="entry name" value="zinc finger protein 37 homolog"/>
    <property type="match status" value="1"/>
</dbReference>
<dbReference type="FunFam" id="3.30.160.60:FF:001498">
    <property type="entry name" value="Zinc finger protein 404"/>
    <property type="match status" value="1"/>
</dbReference>
<dbReference type="FunFam" id="3.30.160.60:FF:000967">
    <property type="entry name" value="zinc finger protein 436 isoform X1"/>
    <property type="match status" value="1"/>
</dbReference>
<dbReference type="FunFam" id="3.30.160.60:FF:001219">
    <property type="entry name" value="zinc finger protein 436 isoform X2"/>
    <property type="match status" value="1"/>
</dbReference>
<dbReference type="FunFam" id="3.30.160.60:FF:002090">
    <property type="entry name" value="Zinc finger protein 473"/>
    <property type="match status" value="2"/>
</dbReference>
<dbReference type="FunFam" id="3.30.160.60:FF:001697">
    <property type="entry name" value="zinc finger protein 623"/>
    <property type="match status" value="1"/>
</dbReference>
<dbReference type="FunFam" id="3.30.160.60:FF:000953">
    <property type="entry name" value="Zinc finger protein 691"/>
    <property type="match status" value="1"/>
</dbReference>
<dbReference type="Gene3D" id="6.10.140.140">
    <property type="match status" value="1"/>
</dbReference>
<dbReference type="Gene3D" id="3.30.160.60">
    <property type="entry name" value="Classic Zinc Finger"/>
    <property type="match status" value="12"/>
</dbReference>
<dbReference type="InterPro" id="IPR001909">
    <property type="entry name" value="KRAB"/>
</dbReference>
<dbReference type="InterPro" id="IPR036051">
    <property type="entry name" value="KRAB_dom_sf"/>
</dbReference>
<dbReference type="InterPro" id="IPR036236">
    <property type="entry name" value="Znf_C2H2_sf"/>
</dbReference>
<dbReference type="InterPro" id="IPR013087">
    <property type="entry name" value="Znf_C2H2_type"/>
</dbReference>
<dbReference type="PANTHER" id="PTHR14003">
    <property type="entry name" value="TRANSCRIPTIONAL REPRESSOR PROTEIN YY"/>
    <property type="match status" value="1"/>
</dbReference>
<dbReference type="PANTHER" id="PTHR14003:SF23">
    <property type="entry name" value="ZINC FINGER PROTEIN 143"/>
    <property type="match status" value="1"/>
</dbReference>
<dbReference type="Pfam" id="PF01352">
    <property type="entry name" value="KRAB"/>
    <property type="match status" value="1"/>
</dbReference>
<dbReference type="Pfam" id="PF00096">
    <property type="entry name" value="zf-C2H2"/>
    <property type="match status" value="12"/>
</dbReference>
<dbReference type="SMART" id="SM00349">
    <property type="entry name" value="KRAB"/>
    <property type="match status" value="1"/>
</dbReference>
<dbReference type="SMART" id="SM00355">
    <property type="entry name" value="ZnF_C2H2"/>
    <property type="match status" value="12"/>
</dbReference>
<dbReference type="SUPFAM" id="SSF57667">
    <property type="entry name" value="beta-beta-alpha zinc fingers"/>
    <property type="match status" value="6"/>
</dbReference>
<dbReference type="SUPFAM" id="SSF109640">
    <property type="entry name" value="KRAB domain (Kruppel-associated box)"/>
    <property type="match status" value="1"/>
</dbReference>
<dbReference type="PROSITE" id="PS50805">
    <property type="entry name" value="KRAB"/>
    <property type="match status" value="1"/>
</dbReference>
<dbReference type="PROSITE" id="PS00028">
    <property type="entry name" value="ZINC_FINGER_C2H2_1"/>
    <property type="match status" value="12"/>
</dbReference>
<dbReference type="PROSITE" id="PS50157">
    <property type="entry name" value="ZINC_FINGER_C2H2_2"/>
    <property type="match status" value="12"/>
</dbReference>
<comment type="function">
    <text>May be involved in transcriptional regulation.</text>
</comment>
<comment type="subcellular location">
    <subcellularLocation>
        <location evidence="6">Nucleus</location>
    </subcellularLocation>
</comment>
<comment type="tissue specificity">
    <text evidence="5">Lens, liver, heart, kidney, spleen and brain.</text>
</comment>
<comment type="similarity">
    <text evidence="6">Belongs to the krueppel C2H2-type zinc-finger protein family.</text>
</comment>
<comment type="sequence caution" evidence="6">
    <conflict type="erroneous initiation">
        <sequence resource="EMBL-CDS" id="AAA39949"/>
    </conflict>
</comment>
<comment type="sequence caution" evidence="6">
    <conflict type="erroneous initiation">
        <sequence resource="EMBL-CDS" id="BAD32518"/>
    </conflict>
</comment>
<gene>
    <name type="primary">Znf436</name>
    <name type="synonym">Kiaa1710</name>
    <name type="synonym">Mlz-4</name>
    <name type="synonym">Zfp46</name>
</gene>
<reference key="1">
    <citation type="journal article" date="2004" name="DNA Res.">
        <title>Prediction of the coding sequences of mouse homologues of KIAA gene: IV. The complete nucleotide sequences of 500 mouse KIAA-homologous cDNAs identified by screening of terminal sequences of cDNA clones randomly sampled from size-fractionated libraries.</title>
        <authorList>
            <person name="Okazaki N."/>
            <person name="Kikuno R."/>
            <person name="Ohara R."/>
            <person name="Inamoto S."/>
            <person name="Koseki H."/>
            <person name="Hiraoka S."/>
            <person name="Saga Y."/>
            <person name="Seino S."/>
            <person name="Nishimura M."/>
            <person name="Kaisho T."/>
            <person name="Hoshino K."/>
            <person name="Kitamura H."/>
            <person name="Nagase T."/>
            <person name="Ohara O."/>
            <person name="Koga H."/>
        </authorList>
    </citation>
    <scope>NUCLEOTIDE SEQUENCE [LARGE SCALE MRNA]</scope>
    <source>
        <tissue>Brain</tissue>
    </source>
</reference>
<reference key="2">
    <citation type="journal article" date="2005" name="Science">
        <title>The transcriptional landscape of the mammalian genome.</title>
        <authorList>
            <person name="Carninci P."/>
            <person name="Kasukawa T."/>
            <person name="Katayama S."/>
            <person name="Gough J."/>
            <person name="Frith M.C."/>
            <person name="Maeda N."/>
            <person name="Oyama R."/>
            <person name="Ravasi T."/>
            <person name="Lenhard B."/>
            <person name="Wells C."/>
            <person name="Kodzius R."/>
            <person name="Shimokawa K."/>
            <person name="Bajic V.B."/>
            <person name="Brenner S.E."/>
            <person name="Batalov S."/>
            <person name="Forrest A.R."/>
            <person name="Zavolan M."/>
            <person name="Davis M.J."/>
            <person name="Wilming L.G."/>
            <person name="Aidinis V."/>
            <person name="Allen J.E."/>
            <person name="Ambesi-Impiombato A."/>
            <person name="Apweiler R."/>
            <person name="Aturaliya R.N."/>
            <person name="Bailey T.L."/>
            <person name="Bansal M."/>
            <person name="Baxter L."/>
            <person name="Beisel K.W."/>
            <person name="Bersano T."/>
            <person name="Bono H."/>
            <person name="Chalk A.M."/>
            <person name="Chiu K.P."/>
            <person name="Choudhary V."/>
            <person name="Christoffels A."/>
            <person name="Clutterbuck D.R."/>
            <person name="Crowe M.L."/>
            <person name="Dalla E."/>
            <person name="Dalrymple B.P."/>
            <person name="de Bono B."/>
            <person name="Della Gatta G."/>
            <person name="di Bernardo D."/>
            <person name="Down T."/>
            <person name="Engstrom P."/>
            <person name="Fagiolini M."/>
            <person name="Faulkner G."/>
            <person name="Fletcher C.F."/>
            <person name="Fukushima T."/>
            <person name="Furuno M."/>
            <person name="Futaki S."/>
            <person name="Gariboldi M."/>
            <person name="Georgii-Hemming P."/>
            <person name="Gingeras T.R."/>
            <person name="Gojobori T."/>
            <person name="Green R.E."/>
            <person name="Gustincich S."/>
            <person name="Harbers M."/>
            <person name="Hayashi Y."/>
            <person name="Hensch T.K."/>
            <person name="Hirokawa N."/>
            <person name="Hill D."/>
            <person name="Huminiecki L."/>
            <person name="Iacono M."/>
            <person name="Ikeo K."/>
            <person name="Iwama A."/>
            <person name="Ishikawa T."/>
            <person name="Jakt M."/>
            <person name="Kanapin A."/>
            <person name="Katoh M."/>
            <person name="Kawasawa Y."/>
            <person name="Kelso J."/>
            <person name="Kitamura H."/>
            <person name="Kitano H."/>
            <person name="Kollias G."/>
            <person name="Krishnan S.P."/>
            <person name="Kruger A."/>
            <person name="Kummerfeld S.K."/>
            <person name="Kurochkin I.V."/>
            <person name="Lareau L.F."/>
            <person name="Lazarevic D."/>
            <person name="Lipovich L."/>
            <person name="Liu J."/>
            <person name="Liuni S."/>
            <person name="McWilliam S."/>
            <person name="Madan Babu M."/>
            <person name="Madera M."/>
            <person name="Marchionni L."/>
            <person name="Matsuda H."/>
            <person name="Matsuzawa S."/>
            <person name="Miki H."/>
            <person name="Mignone F."/>
            <person name="Miyake S."/>
            <person name="Morris K."/>
            <person name="Mottagui-Tabar S."/>
            <person name="Mulder N."/>
            <person name="Nakano N."/>
            <person name="Nakauchi H."/>
            <person name="Ng P."/>
            <person name="Nilsson R."/>
            <person name="Nishiguchi S."/>
            <person name="Nishikawa S."/>
            <person name="Nori F."/>
            <person name="Ohara O."/>
            <person name="Okazaki Y."/>
            <person name="Orlando V."/>
            <person name="Pang K.C."/>
            <person name="Pavan W.J."/>
            <person name="Pavesi G."/>
            <person name="Pesole G."/>
            <person name="Petrovsky N."/>
            <person name="Piazza S."/>
            <person name="Reed J."/>
            <person name="Reid J.F."/>
            <person name="Ring B.Z."/>
            <person name="Ringwald M."/>
            <person name="Rost B."/>
            <person name="Ruan Y."/>
            <person name="Salzberg S.L."/>
            <person name="Sandelin A."/>
            <person name="Schneider C."/>
            <person name="Schoenbach C."/>
            <person name="Sekiguchi K."/>
            <person name="Semple C.A."/>
            <person name="Seno S."/>
            <person name="Sessa L."/>
            <person name="Sheng Y."/>
            <person name="Shibata Y."/>
            <person name="Shimada H."/>
            <person name="Shimada K."/>
            <person name="Silva D."/>
            <person name="Sinclair B."/>
            <person name="Sperling S."/>
            <person name="Stupka E."/>
            <person name="Sugiura K."/>
            <person name="Sultana R."/>
            <person name="Takenaka Y."/>
            <person name="Taki K."/>
            <person name="Tammoja K."/>
            <person name="Tan S.L."/>
            <person name="Tang S."/>
            <person name="Taylor M.S."/>
            <person name="Tegner J."/>
            <person name="Teichmann S.A."/>
            <person name="Ueda H.R."/>
            <person name="van Nimwegen E."/>
            <person name="Verardo R."/>
            <person name="Wei C.L."/>
            <person name="Yagi K."/>
            <person name="Yamanishi H."/>
            <person name="Zabarovsky E."/>
            <person name="Zhu S."/>
            <person name="Zimmer A."/>
            <person name="Hide W."/>
            <person name="Bult C."/>
            <person name="Grimmond S.M."/>
            <person name="Teasdale R.D."/>
            <person name="Liu E.T."/>
            <person name="Brusic V."/>
            <person name="Quackenbush J."/>
            <person name="Wahlestedt C."/>
            <person name="Mattick J.S."/>
            <person name="Hume D.A."/>
            <person name="Kai C."/>
            <person name="Sasaki D."/>
            <person name="Tomaru Y."/>
            <person name="Fukuda S."/>
            <person name="Kanamori-Katayama M."/>
            <person name="Suzuki M."/>
            <person name="Aoki J."/>
            <person name="Arakawa T."/>
            <person name="Iida J."/>
            <person name="Imamura K."/>
            <person name="Itoh M."/>
            <person name="Kato T."/>
            <person name="Kawaji H."/>
            <person name="Kawagashira N."/>
            <person name="Kawashima T."/>
            <person name="Kojima M."/>
            <person name="Kondo S."/>
            <person name="Konno H."/>
            <person name="Nakano K."/>
            <person name="Ninomiya N."/>
            <person name="Nishio T."/>
            <person name="Okada M."/>
            <person name="Plessy C."/>
            <person name="Shibata K."/>
            <person name="Shiraki T."/>
            <person name="Suzuki S."/>
            <person name="Tagami M."/>
            <person name="Waki K."/>
            <person name="Watahiki A."/>
            <person name="Okamura-Oho Y."/>
            <person name="Suzuki H."/>
            <person name="Kawai J."/>
            <person name="Hayashizaki Y."/>
        </authorList>
    </citation>
    <scope>NUCLEOTIDE SEQUENCE [LARGE SCALE MRNA]</scope>
    <source>
        <strain>C57BL/6J</strain>
        <tissue>Eye</tissue>
        <tissue>Mammary gland</tissue>
    </source>
</reference>
<reference key="3">
    <citation type="journal article" date="1993" name="Gene">
        <title>Cloning and characterization of a novel zinc-finger protein-encoding cDNA from the mouse eye lens.</title>
        <authorList>
            <person name="Brady J.P."/>
            <person name="Piatigorsky J."/>
        </authorList>
    </citation>
    <scope>NUCLEOTIDE SEQUENCE [MRNA] OF 36-452</scope>
    <scope>TISSUE SPECIFICITY</scope>
    <source>
        <tissue>Lens</tissue>
    </source>
</reference>
<name>ZN436_MOUSE</name>
<organism>
    <name type="scientific">Mus musculus</name>
    <name type="common">Mouse</name>
    <dbReference type="NCBI Taxonomy" id="10090"/>
    <lineage>
        <taxon>Eukaryota</taxon>
        <taxon>Metazoa</taxon>
        <taxon>Chordata</taxon>
        <taxon>Craniata</taxon>
        <taxon>Vertebrata</taxon>
        <taxon>Euteleostomi</taxon>
        <taxon>Mammalia</taxon>
        <taxon>Eutheria</taxon>
        <taxon>Euarchontoglires</taxon>
        <taxon>Glires</taxon>
        <taxon>Rodentia</taxon>
        <taxon>Myomorpha</taxon>
        <taxon>Muroidea</taxon>
        <taxon>Muridae</taxon>
        <taxon>Murinae</taxon>
        <taxon>Mus</taxon>
        <taxon>Mus</taxon>
    </lineage>
</organism>
<protein>
    <recommendedName>
        <fullName>Zinc finger protein 436</fullName>
    </recommendedName>
    <alternativeName>
        <fullName>Zinc finger protein 46</fullName>
        <shortName>Zfp-46</shortName>
    </alternativeName>
    <alternativeName>
        <fullName>Zinc finger protein MLZ-4</fullName>
    </alternativeName>
</protein>
<accession>Q8BPP0</accession>
<accession>Q03309</accession>
<accession>Q69ZC6</accession>
<accession>Q8BQC2</accession>
<keyword id="KW-0238">DNA-binding</keyword>
<keyword id="KW-1017">Isopeptide bond</keyword>
<keyword id="KW-0479">Metal-binding</keyword>
<keyword id="KW-0539">Nucleus</keyword>
<keyword id="KW-1185">Reference proteome</keyword>
<keyword id="KW-0677">Repeat</keyword>
<keyword id="KW-0804">Transcription</keyword>
<keyword id="KW-0805">Transcription regulation</keyword>
<keyword id="KW-0832">Ubl conjugation</keyword>
<keyword id="KW-0862">Zinc</keyword>
<keyword id="KW-0863">Zinc-finger</keyword>
<feature type="chain" id="PRO_0000047585" description="Zinc finger protein 436">
    <location>
        <begin position="1"/>
        <end position="452"/>
    </location>
</feature>
<feature type="domain" description="KRAB" evidence="3">
    <location>
        <begin position="1"/>
        <end position="100"/>
    </location>
</feature>
<feature type="zinc finger region" description="C2H2-type 1" evidence="2">
    <location>
        <begin position="120"/>
        <end position="142"/>
    </location>
</feature>
<feature type="zinc finger region" description="C2H2-type 2" evidence="2">
    <location>
        <begin position="148"/>
        <end position="170"/>
    </location>
</feature>
<feature type="zinc finger region" description="C2H2-type 3" evidence="2">
    <location>
        <begin position="176"/>
        <end position="198"/>
    </location>
</feature>
<feature type="zinc finger region" description="C2H2-type 4" evidence="2">
    <location>
        <begin position="204"/>
        <end position="226"/>
    </location>
</feature>
<feature type="zinc finger region" description="C2H2-type 5" evidence="2">
    <location>
        <begin position="232"/>
        <end position="254"/>
    </location>
</feature>
<feature type="zinc finger region" description="C2H2-type 6" evidence="2">
    <location>
        <begin position="260"/>
        <end position="282"/>
    </location>
</feature>
<feature type="zinc finger region" description="C2H2-type 7" evidence="2">
    <location>
        <begin position="288"/>
        <end position="310"/>
    </location>
</feature>
<feature type="zinc finger region" description="C2H2-type 8" evidence="2">
    <location>
        <begin position="316"/>
        <end position="338"/>
    </location>
</feature>
<feature type="zinc finger region" description="C2H2-type 9" evidence="2">
    <location>
        <begin position="344"/>
        <end position="366"/>
    </location>
</feature>
<feature type="zinc finger region" description="C2H2-type 10" evidence="2">
    <location>
        <begin position="372"/>
        <end position="394"/>
    </location>
</feature>
<feature type="zinc finger region" description="C2H2-type 11" evidence="2">
    <location>
        <begin position="400"/>
        <end position="422"/>
    </location>
</feature>
<feature type="zinc finger region" description="C2H2-type 12" evidence="2">
    <location>
        <begin position="428"/>
        <end position="450"/>
    </location>
</feature>
<feature type="region of interest" description="Disordered" evidence="4">
    <location>
        <begin position="43"/>
        <end position="84"/>
    </location>
</feature>
<feature type="cross-link" description="Glycyl lysine isopeptide (Lys-Gly) (interchain with G-Cter in SUMO2)" evidence="1">
    <location>
        <position position="48"/>
    </location>
</feature>
<feature type="sequence conflict" description="In Ref. 2; BAC34503." evidence="6" ref="2">
    <original>M</original>
    <variation>I</variation>
    <location>
        <position position="3"/>
    </location>
</feature>
<feature type="sequence conflict" description="In Ref. 3; AAA39949." evidence="6" ref="3">
    <original>GKSFCRLS</original>
    <variation>AKASAASP</variation>
    <location>
        <begin position="210"/>
        <end position="217"/>
    </location>
</feature>
<sequence>MAMYLTREEWRPLDPTQRDLYRDVMQENYGNVVSLDFEIRSENEANPKQEFSDDVEFATMSEEPLENAEKNPGSEEAFESGDQAERPWGDLTAEEWVSYPLQQVTDLLVHKEAHAGIRYHICSQCGKAFSQISDLNRHQKTHTGDRPYKCYECGKGFSRSSHLIQHQRTHTGERPYDCNECGKSFGRSSHLIQHQTIHTGEKPHKCTECGKSFCRLSHLIQHQRTHSGEKPYECEECGKSFSRSSHLAQHQRTHTGEKPYECHECGRGFSERSDLIKHYRVHTGERPYKCDECGKNFSQNSDLVRHRRAHTGEKPYHCNECGENFSRISHLVQHQRTHTGEKPYECTACGKSFSRSSHLITHQKIHTGEKPYECNECWRSFGERSDLIKHQRTHTGEKPYECVQCGKGFTQSSNLITHQRVHTGEKPYECTECDKSFSRSSALIKHKRVHTD</sequence>